<organism>
    <name type="scientific">Shewanella frigidimarina (strain NCIMB 400)</name>
    <dbReference type="NCBI Taxonomy" id="318167"/>
    <lineage>
        <taxon>Bacteria</taxon>
        <taxon>Pseudomonadati</taxon>
        <taxon>Pseudomonadota</taxon>
        <taxon>Gammaproteobacteria</taxon>
        <taxon>Alteromonadales</taxon>
        <taxon>Shewanellaceae</taxon>
        <taxon>Shewanella</taxon>
    </lineage>
</organism>
<accession>Q088W8</accession>
<evidence type="ECO:0000255" key="1">
    <source>
        <dbReference type="HAMAP-Rule" id="MF_01216"/>
    </source>
</evidence>
<protein>
    <recommendedName>
        <fullName evidence="1">FMN-dependent NADH:quinone oxidoreductase</fullName>
        <ecNumber evidence="1">1.6.5.-</ecNumber>
    </recommendedName>
    <alternativeName>
        <fullName evidence="1">Azo-dye reductase</fullName>
    </alternativeName>
    <alternativeName>
        <fullName evidence="1">FMN-dependent NADH-azo compound oxidoreductase</fullName>
    </alternativeName>
    <alternativeName>
        <fullName evidence="1">FMN-dependent NADH-azoreductase</fullName>
        <ecNumber evidence="1">1.7.1.17</ecNumber>
    </alternativeName>
</protein>
<sequence length="197" mass="20828">MAKVLILKSSILGSYSQSSALVDYLNQQWSSKGAQIKVRDLGENTLPMLDGELASGLRGGDNLSERQLSALALSDELVAEIKAHDTIIIAAPMYNFGIPTTLKNWIDLIARAGVTFTYTDTGAVGLIEGKRAIIVTTRGGAHKGGPTDHVVPYLTTVLGFIGINNVETIYAEALNMGPDAAETGISQAKLAIDAITL</sequence>
<keyword id="KW-0285">Flavoprotein</keyword>
<keyword id="KW-0288">FMN</keyword>
<keyword id="KW-0520">NAD</keyword>
<keyword id="KW-0560">Oxidoreductase</keyword>
<keyword id="KW-1185">Reference proteome</keyword>
<reference key="1">
    <citation type="submission" date="2006-08" db="EMBL/GenBank/DDBJ databases">
        <title>Complete sequence of Shewanella frigidimarina NCIMB 400.</title>
        <authorList>
            <consortium name="US DOE Joint Genome Institute"/>
            <person name="Copeland A."/>
            <person name="Lucas S."/>
            <person name="Lapidus A."/>
            <person name="Barry K."/>
            <person name="Detter J.C."/>
            <person name="Glavina del Rio T."/>
            <person name="Hammon N."/>
            <person name="Israni S."/>
            <person name="Dalin E."/>
            <person name="Tice H."/>
            <person name="Pitluck S."/>
            <person name="Fredrickson J.K."/>
            <person name="Kolker E."/>
            <person name="McCuel L.A."/>
            <person name="DiChristina T."/>
            <person name="Nealson K.H."/>
            <person name="Newman D."/>
            <person name="Tiedje J.M."/>
            <person name="Zhou J."/>
            <person name="Romine M.F."/>
            <person name="Culley D.E."/>
            <person name="Serres M."/>
            <person name="Chertkov O."/>
            <person name="Brettin T."/>
            <person name="Bruce D."/>
            <person name="Han C."/>
            <person name="Tapia R."/>
            <person name="Gilna P."/>
            <person name="Schmutz J."/>
            <person name="Larimer F."/>
            <person name="Land M."/>
            <person name="Hauser L."/>
            <person name="Kyrpides N."/>
            <person name="Mikhailova N."/>
            <person name="Richardson P."/>
        </authorList>
    </citation>
    <scope>NUCLEOTIDE SEQUENCE [LARGE SCALE GENOMIC DNA]</scope>
    <source>
        <strain>NCIMB 400</strain>
    </source>
</reference>
<feature type="chain" id="PRO_1000066523" description="FMN-dependent NADH:quinone oxidoreductase">
    <location>
        <begin position="1"/>
        <end position="197"/>
    </location>
</feature>
<feature type="binding site" evidence="1">
    <location>
        <position position="10"/>
    </location>
    <ligand>
        <name>FMN</name>
        <dbReference type="ChEBI" id="CHEBI:58210"/>
    </ligand>
</feature>
<feature type="binding site" evidence="1">
    <location>
        <begin position="16"/>
        <end position="18"/>
    </location>
    <ligand>
        <name>FMN</name>
        <dbReference type="ChEBI" id="CHEBI:58210"/>
    </ligand>
</feature>
<feature type="binding site" evidence="1">
    <location>
        <begin position="93"/>
        <end position="96"/>
    </location>
    <ligand>
        <name>FMN</name>
        <dbReference type="ChEBI" id="CHEBI:58210"/>
    </ligand>
</feature>
<feature type="binding site" evidence="1">
    <location>
        <begin position="137"/>
        <end position="140"/>
    </location>
    <ligand>
        <name>FMN</name>
        <dbReference type="ChEBI" id="CHEBI:58210"/>
    </ligand>
</feature>
<dbReference type="EC" id="1.6.5.-" evidence="1"/>
<dbReference type="EC" id="1.7.1.17" evidence="1"/>
<dbReference type="EMBL" id="CP000447">
    <property type="protein sequence ID" value="ABI70197.1"/>
    <property type="molecule type" value="Genomic_DNA"/>
</dbReference>
<dbReference type="RefSeq" id="WP_011635824.1">
    <property type="nucleotide sequence ID" value="NC_008345.1"/>
</dbReference>
<dbReference type="SMR" id="Q088W8"/>
<dbReference type="STRING" id="318167.Sfri_0334"/>
<dbReference type="KEGG" id="sfr:Sfri_0334"/>
<dbReference type="eggNOG" id="COG1182">
    <property type="taxonomic scope" value="Bacteria"/>
</dbReference>
<dbReference type="HOGENOM" id="CLU_088964_0_0_6"/>
<dbReference type="OrthoDB" id="9787136at2"/>
<dbReference type="Proteomes" id="UP000000684">
    <property type="component" value="Chromosome"/>
</dbReference>
<dbReference type="GO" id="GO:0009055">
    <property type="term" value="F:electron transfer activity"/>
    <property type="evidence" value="ECO:0007669"/>
    <property type="project" value="UniProtKB-UniRule"/>
</dbReference>
<dbReference type="GO" id="GO:0010181">
    <property type="term" value="F:FMN binding"/>
    <property type="evidence" value="ECO:0007669"/>
    <property type="project" value="UniProtKB-UniRule"/>
</dbReference>
<dbReference type="GO" id="GO:0016652">
    <property type="term" value="F:oxidoreductase activity, acting on NAD(P)H as acceptor"/>
    <property type="evidence" value="ECO:0007669"/>
    <property type="project" value="UniProtKB-UniRule"/>
</dbReference>
<dbReference type="GO" id="GO:0016655">
    <property type="term" value="F:oxidoreductase activity, acting on NAD(P)H, quinone or similar compound as acceptor"/>
    <property type="evidence" value="ECO:0007669"/>
    <property type="project" value="InterPro"/>
</dbReference>
<dbReference type="Gene3D" id="3.40.50.360">
    <property type="match status" value="1"/>
</dbReference>
<dbReference type="HAMAP" id="MF_01216">
    <property type="entry name" value="Azoreductase_type1"/>
    <property type="match status" value="1"/>
</dbReference>
<dbReference type="InterPro" id="IPR003680">
    <property type="entry name" value="Flavodoxin_fold"/>
</dbReference>
<dbReference type="InterPro" id="IPR029039">
    <property type="entry name" value="Flavoprotein-like_sf"/>
</dbReference>
<dbReference type="InterPro" id="IPR050104">
    <property type="entry name" value="FMN-dep_NADH:Q_OxRdtase_AzoR1"/>
</dbReference>
<dbReference type="InterPro" id="IPR023048">
    <property type="entry name" value="NADH:quinone_OxRdtase_FMN_depd"/>
</dbReference>
<dbReference type="PANTHER" id="PTHR43741">
    <property type="entry name" value="FMN-DEPENDENT NADH-AZOREDUCTASE 1"/>
    <property type="match status" value="1"/>
</dbReference>
<dbReference type="PANTHER" id="PTHR43741:SF2">
    <property type="entry name" value="FMN-DEPENDENT NADH:QUINONE OXIDOREDUCTASE"/>
    <property type="match status" value="1"/>
</dbReference>
<dbReference type="Pfam" id="PF02525">
    <property type="entry name" value="Flavodoxin_2"/>
    <property type="match status" value="1"/>
</dbReference>
<dbReference type="SUPFAM" id="SSF52218">
    <property type="entry name" value="Flavoproteins"/>
    <property type="match status" value="1"/>
</dbReference>
<proteinExistence type="inferred from homology"/>
<comment type="function">
    <text evidence="1">Quinone reductase that provides resistance to thiol-specific stress caused by electrophilic quinones.</text>
</comment>
<comment type="function">
    <text evidence="1">Also exhibits azoreductase activity. Catalyzes the reductive cleavage of the azo bond in aromatic azo compounds to the corresponding amines.</text>
</comment>
<comment type="catalytic activity">
    <reaction evidence="1">
        <text>2 a quinone + NADH + H(+) = 2 a 1,4-benzosemiquinone + NAD(+)</text>
        <dbReference type="Rhea" id="RHEA:65952"/>
        <dbReference type="ChEBI" id="CHEBI:15378"/>
        <dbReference type="ChEBI" id="CHEBI:57540"/>
        <dbReference type="ChEBI" id="CHEBI:57945"/>
        <dbReference type="ChEBI" id="CHEBI:132124"/>
        <dbReference type="ChEBI" id="CHEBI:134225"/>
    </reaction>
</comment>
<comment type="catalytic activity">
    <reaction evidence="1">
        <text>N,N-dimethyl-1,4-phenylenediamine + anthranilate + 2 NAD(+) = 2-(4-dimethylaminophenyl)diazenylbenzoate + 2 NADH + 2 H(+)</text>
        <dbReference type="Rhea" id="RHEA:55872"/>
        <dbReference type="ChEBI" id="CHEBI:15378"/>
        <dbReference type="ChEBI" id="CHEBI:15783"/>
        <dbReference type="ChEBI" id="CHEBI:16567"/>
        <dbReference type="ChEBI" id="CHEBI:57540"/>
        <dbReference type="ChEBI" id="CHEBI:57945"/>
        <dbReference type="ChEBI" id="CHEBI:71579"/>
        <dbReference type="EC" id="1.7.1.17"/>
    </reaction>
</comment>
<comment type="cofactor">
    <cofactor evidence="1">
        <name>FMN</name>
        <dbReference type="ChEBI" id="CHEBI:58210"/>
    </cofactor>
    <text evidence="1">Binds 1 FMN per subunit.</text>
</comment>
<comment type="subunit">
    <text evidence="1">Homodimer.</text>
</comment>
<comment type="similarity">
    <text evidence="1">Belongs to the azoreductase type 1 family.</text>
</comment>
<gene>
    <name evidence="1" type="primary">azoR</name>
    <name type="ordered locus">Sfri_0334</name>
</gene>
<name>AZOR_SHEFN</name>